<proteinExistence type="inferred from homology"/>
<gene>
    <name evidence="2" type="primary">ddl</name>
    <name type="ordered locus">YPN_0423</name>
    <name type="ORF">YP516_0437</name>
</gene>
<feature type="chain" id="PRO_1000030521" description="D-alanine--D-alanine ligase">
    <location>
        <begin position="1"/>
        <end position="306"/>
    </location>
</feature>
<feature type="domain" description="ATP-grasp" evidence="2">
    <location>
        <begin position="101"/>
        <end position="303"/>
    </location>
</feature>
<feature type="binding site" evidence="2">
    <location>
        <begin position="134"/>
        <end position="189"/>
    </location>
    <ligand>
        <name>ATP</name>
        <dbReference type="ChEBI" id="CHEBI:30616"/>
    </ligand>
</feature>
<feature type="binding site" evidence="2">
    <location>
        <position position="257"/>
    </location>
    <ligand>
        <name>Mg(2+)</name>
        <dbReference type="ChEBI" id="CHEBI:18420"/>
        <label>1</label>
    </ligand>
</feature>
<feature type="binding site" evidence="2">
    <location>
        <position position="270"/>
    </location>
    <ligand>
        <name>Mg(2+)</name>
        <dbReference type="ChEBI" id="CHEBI:18420"/>
        <label>1</label>
    </ligand>
</feature>
<feature type="binding site" evidence="2">
    <location>
        <position position="270"/>
    </location>
    <ligand>
        <name>Mg(2+)</name>
        <dbReference type="ChEBI" id="CHEBI:18420"/>
        <label>2</label>
    </ligand>
</feature>
<feature type="binding site" evidence="2">
    <location>
        <position position="272"/>
    </location>
    <ligand>
        <name>Mg(2+)</name>
        <dbReference type="ChEBI" id="CHEBI:18420"/>
        <label>2</label>
    </ligand>
</feature>
<keyword id="KW-0067">ATP-binding</keyword>
<keyword id="KW-0133">Cell shape</keyword>
<keyword id="KW-0961">Cell wall biogenesis/degradation</keyword>
<keyword id="KW-0963">Cytoplasm</keyword>
<keyword id="KW-0436">Ligase</keyword>
<keyword id="KW-0460">Magnesium</keyword>
<keyword id="KW-0464">Manganese</keyword>
<keyword id="KW-0479">Metal-binding</keyword>
<keyword id="KW-0547">Nucleotide-binding</keyword>
<keyword id="KW-0573">Peptidoglycan synthesis</keyword>
<sequence length="306" mass="33150">MAEKVAVLLGGTSAEREVSLLSGQAVLAGLKEAGIDAYGVDTKDFPVTQLKEQGFDKVFIALHGRGGEDGTLQGVLEFLQLPYTGSGVMASALTMDKLRTKLVWQALGLPISPYVALNRQQFETLSPEELVACVAKLGLPLIVKPSHEGSSVGMSKVDHASELQKALVEAFQHDSDVLIEKWLSGPEFTVAILGDEVLPSIRIQPPGVFYDYDAKYLSDKTQYFCPSGLSDESEQQLAALALQAYHALDCSGWGRVDVMQDRDGHFYLLEVNTSPGMTSHSLVPMAARQYGLSFSQLVARILMLAD</sequence>
<dbReference type="EC" id="6.3.2.4" evidence="2"/>
<dbReference type="EMBL" id="CP000305">
    <property type="protein sequence ID" value="ABG16755.1"/>
    <property type="molecule type" value="Genomic_DNA"/>
</dbReference>
<dbReference type="EMBL" id="ACNQ01000006">
    <property type="protein sequence ID" value="EEO78211.1"/>
    <property type="molecule type" value="Genomic_DNA"/>
</dbReference>
<dbReference type="RefSeq" id="WP_002210432.1">
    <property type="nucleotide sequence ID" value="NZ_ACNQ01000006.1"/>
</dbReference>
<dbReference type="SMR" id="Q1CMM5"/>
<dbReference type="KEGG" id="ypn:YPN_0423"/>
<dbReference type="HOGENOM" id="CLU_039268_1_2_6"/>
<dbReference type="UniPathway" id="UPA00219"/>
<dbReference type="Proteomes" id="UP000008936">
    <property type="component" value="Chromosome"/>
</dbReference>
<dbReference type="GO" id="GO:0005829">
    <property type="term" value="C:cytosol"/>
    <property type="evidence" value="ECO:0007669"/>
    <property type="project" value="TreeGrafter"/>
</dbReference>
<dbReference type="GO" id="GO:0005524">
    <property type="term" value="F:ATP binding"/>
    <property type="evidence" value="ECO:0007669"/>
    <property type="project" value="UniProtKB-KW"/>
</dbReference>
<dbReference type="GO" id="GO:0008716">
    <property type="term" value="F:D-alanine-D-alanine ligase activity"/>
    <property type="evidence" value="ECO:0007669"/>
    <property type="project" value="UniProtKB-UniRule"/>
</dbReference>
<dbReference type="GO" id="GO:0046872">
    <property type="term" value="F:metal ion binding"/>
    <property type="evidence" value="ECO:0007669"/>
    <property type="project" value="UniProtKB-KW"/>
</dbReference>
<dbReference type="GO" id="GO:0071555">
    <property type="term" value="P:cell wall organization"/>
    <property type="evidence" value="ECO:0007669"/>
    <property type="project" value="UniProtKB-KW"/>
</dbReference>
<dbReference type="GO" id="GO:0009252">
    <property type="term" value="P:peptidoglycan biosynthetic process"/>
    <property type="evidence" value="ECO:0007669"/>
    <property type="project" value="UniProtKB-UniRule"/>
</dbReference>
<dbReference type="GO" id="GO:0008360">
    <property type="term" value="P:regulation of cell shape"/>
    <property type="evidence" value="ECO:0007669"/>
    <property type="project" value="UniProtKB-KW"/>
</dbReference>
<dbReference type="FunFam" id="3.30.1490.20:FF:000007">
    <property type="entry name" value="D-alanine--D-alanine ligase"/>
    <property type="match status" value="1"/>
</dbReference>
<dbReference type="FunFam" id="3.30.470.20:FF:000008">
    <property type="entry name" value="D-alanine--D-alanine ligase"/>
    <property type="match status" value="1"/>
</dbReference>
<dbReference type="FunFam" id="3.40.50.20:FF:000013">
    <property type="entry name" value="D-alanine--D-alanine ligase"/>
    <property type="match status" value="1"/>
</dbReference>
<dbReference type="Gene3D" id="3.40.50.20">
    <property type="match status" value="1"/>
</dbReference>
<dbReference type="Gene3D" id="3.30.1490.20">
    <property type="entry name" value="ATP-grasp fold, A domain"/>
    <property type="match status" value="1"/>
</dbReference>
<dbReference type="Gene3D" id="3.30.470.20">
    <property type="entry name" value="ATP-grasp fold, B domain"/>
    <property type="match status" value="1"/>
</dbReference>
<dbReference type="HAMAP" id="MF_00047">
    <property type="entry name" value="Dala_Dala_lig"/>
    <property type="match status" value="1"/>
</dbReference>
<dbReference type="InterPro" id="IPR011761">
    <property type="entry name" value="ATP-grasp"/>
</dbReference>
<dbReference type="InterPro" id="IPR013815">
    <property type="entry name" value="ATP_grasp_subdomain_1"/>
</dbReference>
<dbReference type="InterPro" id="IPR000291">
    <property type="entry name" value="D-Ala_lig_Van_CS"/>
</dbReference>
<dbReference type="InterPro" id="IPR005905">
    <property type="entry name" value="D_ala_D_ala"/>
</dbReference>
<dbReference type="InterPro" id="IPR011095">
    <property type="entry name" value="Dala_Dala_lig_C"/>
</dbReference>
<dbReference type="InterPro" id="IPR011127">
    <property type="entry name" value="Dala_Dala_lig_N"/>
</dbReference>
<dbReference type="InterPro" id="IPR016185">
    <property type="entry name" value="PreATP-grasp_dom_sf"/>
</dbReference>
<dbReference type="NCBIfam" id="TIGR01205">
    <property type="entry name" value="D_ala_D_alaTIGR"/>
    <property type="match status" value="1"/>
</dbReference>
<dbReference type="NCBIfam" id="NF002378">
    <property type="entry name" value="PRK01372.1"/>
    <property type="match status" value="1"/>
</dbReference>
<dbReference type="PANTHER" id="PTHR23132">
    <property type="entry name" value="D-ALANINE--D-ALANINE LIGASE"/>
    <property type="match status" value="1"/>
</dbReference>
<dbReference type="PANTHER" id="PTHR23132:SF23">
    <property type="entry name" value="D-ALANINE--D-ALANINE LIGASE B"/>
    <property type="match status" value="1"/>
</dbReference>
<dbReference type="Pfam" id="PF07478">
    <property type="entry name" value="Dala_Dala_lig_C"/>
    <property type="match status" value="1"/>
</dbReference>
<dbReference type="Pfam" id="PF01820">
    <property type="entry name" value="Dala_Dala_lig_N"/>
    <property type="match status" value="1"/>
</dbReference>
<dbReference type="PIRSF" id="PIRSF039102">
    <property type="entry name" value="Ddl/VanB"/>
    <property type="match status" value="1"/>
</dbReference>
<dbReference type="SUPFAM" id="SSF56059">
    <property type="entry name" value="Glutathione synthetase ATP-binding domain-like"/>
    <property type="match status" value="1"/>
</dbReference>
<dbReference type="SUPFAM" id="SSF52440">
    <property type="entry name" value="PreATP-grasp domain"/>
    <property type="match status" value="1"/>
</dbReference>
<dbReference type="PROSITE" id="PS50975">
    <property type="entry name" value="ATP_GRASP"/>
    <property type="match status" value="1"/>
</dbReference>
<dbReference type="PROSITE" id="PS00843">
    <property type="entry name" value="DALA_DALA_LIGASE_1"/>
    <property type="match status" value="1"/>
</dbReference>
<dbReference type="PROSITE" id="PS00844">
    <property type="entry name" value="DALA_DALA_LIGASE_2"/>
    <property type="match status" value="1"/>
</dbReference>
<accession>Q1CMM5</accession>
<accession>C4GNX9</accession>
<reference key="1">
    <citation type="journal article" date="2006" name="J. Bacteriol.">
        <title>Complete genome sequence of Yersinia pestis strains Antiqua and Nepal516: evidence of gene reduction in an emerging pathogen.</title>
        <authorList>
            <person name="Chain P.S.G."/>
            <person name="Hu P."/>
            <person name="Malfatti S.A."/>
            <person name="Radnedge L."/>
            <person name="Larimer F."/>
            <person name="Vergez L.M."/>
            <person name="Worsham P."/>
            <person name="Chu M.C."/>
            <person name="Andersen G.L."/>
        </authorList>
    </citation>
    <scope>NUCLEOTIDE SEQUENCE [LARGE SCALE GENOMIC DNA]</scope>
    <source>
        <strain>Nepal516</strain>
    </source>
</reference>
<reference key="2">
    <citation type="submission" date="2009-04" db="EMBL/GenBank/DDBJ databases">
        <title>Yersinia pestis Nepal516A whole genome shotgun sequencing project.</title>
        <authorList>
            <person name="Plunkett G. III"/>
            <person name="Anderson B.D."/>
            <person name="Baumler D.J."/>
            <person name="Burland V."/>
            <person name="Cabot E.L."/>
            <person name="Glasner J.D."/>
            <person name="Mau B."/>
            <person name="Neeno-Eckwall E."/>
            <person name="Perna N.T."/>
            <person name="Munk A.C."/>
            <person name="Tapia R."/>
            <person name="Green L.D."/>
            <person name="Rogers Y.C."/>
            <person name="Detter J.C."/>
            <person name="Bruce D.C."/>
            <person name="Brettin T.S."/>
        </authorList>
    </citation>
    <scope>NUCLEOTIDE SEQUENCE [LARGE SCALE GENOMIC DNA]</scope>
    <source>
        <strain>Nepal516</strain>
    </source>
</reference>
<comment type="function">
    <text evidence="2">Cell wall formation.</text>
</comment>
<comment type="catalytic activity">
    <reaction evidence="2">
        <text>2 D-alanine + ATP = D-alanyl-D-alanine + ADP + phosphate + H(+)</text>
        <dbReference type="Rhea" id="RHEA:11224"/>
        <dbReference type="ChEBI" id="CHEBI:15378"/>
        <dbReference type="ChEBI" id="CHEBI:30616"/>
        <dbReference type="ChEBI" id="CHEBI:43474"/>
        <dbReference type="ChEBI" id="CHEBI:57416"/>
        <dbReference type="ChEBI" id="CHEBI:57822"/>
        <dbReference type="ChEBI" id="CHEBI:456216"/>
        <dbReference type="EC" id="6.3.2.4"/>
    </reaction>
</comment>
<comment type="cofactor">
    <cofactor evidence="1">
        <name>Mg(2+)</name>
        <dbReference type="ChEBI" id="CHEBI:18420"/>
    </cofactor>
    <cofactor evidence="1">
        <name>Mn(2+)</name>
        <dbReference type="ChEBI" id="CHEBI:29035"/>
    </cofactor>
    <text evidence="1">Binds 2 magnesium or manganese ions per subunit.</text>
</comment>
<comment type="pathway">
    <text evidence="2">Cell wall biogenesis; peptidoglycan biosynthesis.</text>
</comment>
<comment type="subcellular location">
    <subcellularLocation>
        <location evidence="2">Cytoplasm</location>
    </subcellularLocation>
</comment>
<comment type="similarity">
    <text evidence="2">Belongs to the D-alanine--D-alanine ligase family.</text>
</comment>
<name>DDL_YERPN</name>
<protein>
    <recommendedName>
        <fullName evidence="2">D-alanine--D-alanine ligase</fullName>
        <ecNumber evidence="2">6.3.2.4</ecNumber>
    </recommendedName>
    <alternativeName>
        <fullName evidence="2">D-Ala-D-Ala ligase</fullName>
    </alternativeName>
    <alternativeName>
        <fullName evidence="2">D-alanylalanine synthetase</fullName>
    </alternativeName>
</protein>
<evidence type="ECO:0000250" key="1"/>
<evidence type="ECO:0000255" key="2">
    <source>
        <dbReference type="HAMAP-Rule" id="MF_00047"/>
    </source>
</evidence>
<organism>
    <name type="scientific">Yersinia pestis bv. Antiqua (strain Nepal516)</name>
    <dbReference type="NCBI Taxonomy" id="377628"/>
    <lineage>
        <taxon>Bacteria</taxon>
        <taxon>Pseudomonadati</taxon>
        <taxon>Pseudomonadota</taxon>
        <taxon>Gammaproteobacteria</taxon>
        <taxon>Enterobacterales</taxon>
        <taxon>Yersiniaceae</taxon>
        <taxon>Yersinia</taxon>
    </lineage>
</organism>